<sequence>MKTTTILILLTHWVHSQNPTGGNNTATLCLGHHAVANGTLVKTITDDQIEVTNATELVQSTSTGKICNNPYRVLDGRNCTLIDAMLGDPHYDVFQYENWDLFIERSSAFSNCYPYDVPDYASLRSLVASSGTLEFMAEGFTWTGVTQNGGSSACRRGSADSFFSRLNWLTQSESSYPTLNVTMPNNDNFDKLYIWGIHHPSTNNEQTKLYVQASGRVTVSTKRSQQTIIPNIGSRPWVRGQSGRISIYWTIVKPGDVLMINSNGNLIAPRGYFKMRTGKSSIMRSDAPIDTCVSECITPNGSIPNDKPFQNVNKVTYGKCPKYVKQSTLKLATGMRNVPEKQIRGIFGAIAGFIENGWEGMVDGWYGFRYQNSEGTLQAGDLKSTQAAIDQINGKLNRVIEKTNEKFHQIEKEFSEVEGRIQDLEKYVEDTKIDLWSYNAELLVALENQHTIDLTDAEMNKLFEKTRRQLRENAEDMGNGCFKIYHKCDNACIESIRNGTYDHDIYRDEALNNRFQIRGVELKSGYKDWILWISFAISCFLICVVLLGFIMWACQKGNIRCNICI</sequence>
<keyword id="KW-1167">Clathrin- and caveolin-independent endocytosis of virus by host</keyword>
<keyword id="KW-1165">Clathrin-mediated endocytosis of virus by host</keyword>
<keyword id="KW-1015">Disulfide bond</keyword>
<keyword id="KW-1170">Fusion of virus membrane with host endosomal membrane</keyword>
<keyword id="KW-1168">Fusion of virus membrane with host membrane</keyword>
<keyword id="KW-0325">Glycoprotein</keyword>
<keyword id="KW-0348">Hemagglutinin</keyword>
<keyword id="KW-1032">Host cell membrane</keyword>
<keyword id="KW-1043">Host membrane</keyword>
<keyword id="KW-0945">Host-virus interaction</keyword>
<keyword id="KW-0449">Lipoprotein</keyword>
<keyword id="KW-0472">Membrane</keyword>
<keyword id="KW-0564">Palmitate</keyword>
<keyword id="KW-0732">Signal</keyword>
<keyword id="KW-0812">Transmembrane</keyword>
<keyword id="KW-1133">Transmembrane helix</keyword>
<keyword id="KW-1161">Viral attachment to host cell</keyword>
<keyword id="KW-0261">Viral envelope protein</keyword>
<keyword id="KW-1162">Viral penetration into host cytoplasm</keyword>
<keyword id="KW-0946">Virion</keyword>
<keyword id="KW-1164">Virus endocytosis by host</keyword>
<keyword id="KW-1160">Virus entry into host cell</keyword>
<organismHost>
    <name type="scientific">Aves</name>
    <dbReference type="NCBI Taxonomy" id="8782"/>
</organismHost>
<organismHost>
    <name type="scientific">Equus caballus</name>
    <name type="common">Horse</name>
    <dbReference type="NCBI Taxonomy" id="9796"/>
</organismHost>
<organism>
    <name type="scientific">Influenza A virus (strain A/Equine/Miami/1/1963 H3N8)</name>
    <dbReference type="NCBI Taxonomy" id="387222"/>
    <lineage>
        <taxon>Viruses</taxon>
        <taxon>Riboviria</taxon>
        <taxon>Orthornavirae</taxon>
        <taxon>Negarnaviricota</taxon>
        <taxon>Polyploviricotina</taxon>
        <taxon>Insthoviricetes</taxon>
        <taxon>Articulavirales</taxon>
        <taxon>Orthomyxoviridae</taxon>
        <taxon>Alphainfluenzavirus</taxon>
        <taxon>Alphainfluenzavirus influenzae</taxon>
        <taxon>Influenza A virus</taxon>
    </lineage>
</organism>
<protein>
    <recommendedName>
        <fullName evidence="1">Hemagglutinin</fullName>
    </recommendedName>
    <component>
        <recommendedName>
            <fullName evidence="1">Hemagglutinin HA1 chain</fullName>
        </recommendedName>
    </component>
    <component>
        <recommendedName>
            <fullName evidence="1">Hemagglutinin HA2 chain</fullName>
        </recommendedName>
    </component>
</protein>
<comment type="function">
    <text>Binds to sialic acid-containing receptors on the cell surface, bringing about the attachment of the virus particle to the cell. This attachment induces virion internalization of about two third of the virus particles through clathrin-dependent endocytosis and about one third through a clathrin- and caveolin-independent pathway. Plays a major role in the determination of host range restriction and virulence. Class I viral fusion protein. Responsible for penetration of the virus into the cell cytoplasm by mediating the fusion of the membrane of the endocytosed virus particle with the endosomal membrane. Low pH in endosomes induces an irreversible conformational change in HA2, releasing the fusion hydrophobic peptide. Several trimers are required to form a competent fusion pore.</text>
</comment>
<comment type="function">
    <text evidence="1">Binds to sialic acid-containing receptors on the cell surface, bringing about the attachment of the virus particle to the cell. This attachment induces virion internalization either through clathrin-dependent endocytosis or through clathrin- and caveolin-independent pathway. Plays a major role in the determination of host range restriction and virulence. Class I viral fusion protein. Responsible for penetration of the virus into the cell cytoplasm by mediating the fusion of the membrane of the endocytosed virus particle with the endosomal membrane. Low pH in endosomes induces an irreversible conformational change in HA2, releasing the fusion hydrophobic peptide. Several trimers are required to form a competent fusion pore.</text>
</comment>
<comment type="subunit">
    <text evidence="1">Homotrimer of disulfide-linked HA1-HA2.</text>
</comment>
<comment type="subcellular location">
    <subcellularLocation>
        <location evidence="1">Virion membrane</location>
        <topology evidence="1">Single-pass type I membrane protein</topology>
    </subcellularLocation>
    <subcellularLocation>
        <location evidence="1">Host apical cell membrane</location>
        <topology evidence="1">Single-pass type I membrane protein</topology>
    </subcellularLocation>
    <text evidence="1">Targeted to the apical plasma membrane in epithelial polarized cells through a signal present in the transmembrane domain. Associated with glycosphingolipid- and cholesterol-enriched detergent-resistant lipid rafts.</text>
</comment>
<comment type="PTM">
    <text evidence="1">Palmitoylated.</text>
</comment>
<comment type="PTM">
    <text evidence="1">In natural infection, inactive HA is matured into HA1 and HA2 outside the cell by one or more trypsin-like, arginine-specific endoprotease secreted by the bronchial epithelial cells. One identified protease that may be involved in this process is secreted in lungs by club cells.</text>
</comment>
<comment type="miscellaneous">
    <text>Major glycoprotein, comprises over 80% of the envelope proteins present in virus particle.</text>
</comment>
<comment type="miscellaneous">
    <text>The extent of infection into host organism is determined by HA. Influenza viruses bud from the apical surface of polarized epithelial cells (e.g. bronchial epithelial cells) into lumen of lungs and are therefore usually pneumotropic. The reason is that HA is cleaved by tryptase clara which is restricted to lungs. However, HAs of H5 and H7 pantropic avian viruses subtypes can be cleaved by furin and subtilisin-type enzymes, allowing the virus to grow in other organs than lungs.</text>
</comment>
<comment type="miscellaneous">
    <text evidence="2">The influenza A genome consist of 8 RNA segments. Genetic variation of hemagglutinin and/or neuraminidase genes results in the emergence of new influenza strains. The mechanism of variation can be the result of point mutations or the result of genetic reassortment between segments of two different strains.</text>
</comment>
<comment type="similarity">
    <text evidence="1">Belongs to the influenza viruses hemagglutinin family.</text>
</comment>
<name>HEMA_I63A2</name>
<dbReference type="EMBL" id="M24719">
    <property type="protein sequence ID" value="AAA43105.1"/>
    <property type="status" value="ALT_SEQ"/>
    <property type="molecule type" value="Genomic_RNA"/>
</dbReference>
<dbReference type="EMBL" id="M29257">
    <property type="protein sequence ID" value="AAA43164.1"/>
    <property type="molecule type" value="Genomic_DNA"/>
</dbReference>
<dbReference type="SMR" id="P15658"/>
<dbReference type="GlyCosmos" id="P15658">
    <property type="glycosylation" value="7 sites, No reported glycans"/>
</dbReference>
<dbReference type="GO" id="GO:0020002">
    <property type="term" value="C:host cell plasma membrane"/>
    <property type="evidence" value="ECO:0007669"/>
    <property type="project" value="UniProtKB-SubCell"/>
</dbReference>
<dbReference type="GO" id="GO:0016020">
    <property type="term" value="C:membrane"/>
    <property type="evidence" value="ECO:0007669"/>
    <property type="project" value="UniProtKB-UniRule"/>
</dbReference>
<dbReference type="GO" id="GO:0019031">
    <property type="term" value="C:viral envelope"/>
    <property type="evidence" value="ECO:0007669"/>
    <property type="project" value="UniProtKB-UniRule"/>
</dbReference>
<dbReference type="GO" id="GO:0055036">
    <property type="term" value="C:virion membrane"/>
    <property type="evidence" value="ECO:0007669"/>
    <property type="project" value="UniProtKB-SubCell"/>
</dbReference>
<dbReference type="GO" id="GO:0046789">
    <property type="term" value="F:host cell surface receptor binding"/>
    <property type="evidence" value="ECO:0007669"/>
    <property type="project" value="UniProtKB-UniRule"/>
</dbReference>
<dbReference type="GO" id="GO:0075512">
    <property type="term" value="P:clathrin-dependent endocytosis of virus by host cell"/>
    <property type="evidence" value="ECO:0007669"/>
    <property type="project" value="UniProtKB-UniRule"/>
</dbReference>
<dbReference type="GO" id="GO:0039654">
    <property type="term" value="P:fusion of virus membrane with host endosome membrane"/>
    <property type="evidence" value="ECO:0007669"/>
    <property type="project" value="UniProtKB-UniRule"/>
</dbReference>
<dbReference type="GO" id="GO:0019064">
    <property type="term" value="P:fusion of virus membrane with host plasma membrane"/>
    <property type="evidence" value="ECO:0007669"/>
    <property type="project" value="InterPro"/>
</dbReference>
<dbReference type="GO" id="GO:0046761">
    <property type="term" value="P:viral budding from plasma membrane"/>
    <property type="evidence" value="ECO:0007669"/>
    <property type="project" value="UniProtKB-UniRule"/>
</dbReference>
<dbReference type="GO" id="GO:0019062">
    <property type="term" value="P:virion attachment to host cell"/>
    <property type="evidence" value="ECO:0007669"/>
    <property type="project" value="UniProtKB-KW"/>
</dbReference>
<dbReference type="FunFam" id="3.90.20.10:FF:000001">
    <property type="entry name" value="Hemagglutinin"/>
    <property type="match status" value="1"/>
</dbReference>
<dbReference type="FunFam" id="3.90.209.20:FF:000001">
    <property type="entry name" value="Hemagglutinin"/>
    <property type="match status" value="1"/>
</dbReference>
<dbReference type="Gene3D" id="3.90.20.10">
    <property type="match status" value="1"/>
</dbReference>
<dbReference type="Gene3D" id="3.90.209.20">
    <property type="match status" value="1"/>
</dbReference>
<dbReference type="HAMAP" id="MF_04072">
    <property type="entry name" value="INFV_HEMA"/>
    <property type="match status" value="1"/>
</dbReference>
<dbReference type="InterPro" id="IPR008980">
    <property type="entry name" value="Capsid_hemagglutn"/>
</dbReference>
<dbReference type="InterPro" id="IPR013828">
    <property type="entry name" value="Hemagglutn_HA1_a/b_dom_sf"/>
</dbReference>
<dbReference type="InterPro" id="IPR000149">
    <property type="entry name" value="Hemagglutn_influenz_A"/>
</dbReference>
<dbReference type="InterPro" id="IPR001364">
    <property type="entry name" value="Hemagglutn_influenz_A/B"/>
</dbReference>
<dbReference type="Pfam" id="PF00509">
    <property type="entry name" value="Hemagglutinin"/>
    <property type="match status" value="1"/>
</dbReference>
<dbReference type="PRINTS" id="PR00330">
    <property type="entry name" value="HEMAGGLUTN1"/>
</dbReference>
<dbReference type="PRINTS" id="PR00329">
    <property type="entry name" value="HEMAGGLUTN12"/>
</dbReference>
<dbReference type="SUPFAM" id="SSF58064">
    <property type="entry name" value="Influenza hemagglutinin (stalk)"/>
    <property type="match status" value="1"/>
</dbReference>
<dbReference type="SUPFAM" id="SSF49818">
    <property type="entry name" value="Viral protein domain"/>
    <property type="match status" value="1"/>
</dbReference>
<proteinExistence type="inferred from homology"/>
<evidence type="ECO:0000255" key="1">
    <source>
        <dbReference type="HAMAP-Rule" id="MF_04072"/>
    </source>
</evidence>
<evidence type="ECO:0000305" key="2"/>
<reference key="1">
    <citation type="journal article" date="1989" name="Virology">
        <title>Evolution of the hemagglutinin of equine H3 influenza viruses.</title>
        <authorList>
            <person name="Kawaoka Y."/>
            <person name="Bean W.J."/>
            <person name="Webster R.G."/>
        </authorList>
    </citation>
    <scope>NUCLEOTIDE SEQUENCE</scope>
</reference>
<reference key="2">
    <citation type="journal article" date="1985" name="J. Gen. Virol.">
        <title>Amino acid sequences of haemagglutinins of influenza viruses of the H3 subtype isolated from horses.</title>
        <authorList>
            <person name="Daniels R.S."/>
            <person name="Skehel J.J."/>
            <person name="Wiley D.C."/>
        </authorList>
    </citation>
    <scope>NUCLEOTIDE SEQUENCE [GENOMIC DNA]</scope>
</reference>
<feature type="signal peptide" evidence="1">
    <location>
        <begin position="1"/>
        <end position="16"/>
    </location>
</feature>
<feature type="chain" id="PRO_0000440399" description="Hemagglutinin" evidence="1">
    <location>
        <begin position="17"/>
        <end position="565"/>
    </location>
</feature>
<feature type="chain" id="PRO_0000038986" description="Hemagglutinin HA1 chain">
    <location>
        <begin position="17"/>
        <end position="343"/>
    </location>
</feature>
<feature type="chain" id="PRO_0000038987" description="Hemagglutinin HA2 chain" evidence="1">
    <location>
        <begin position="345"/>
        <end position="565"/>
    </location>
</feature>
<feature type="topological domain" description="Extracellular" evidence="1">
    <location>
        <begin position="17"/>
        <end position="529"/>
    </location>
</feature>
<feature type="transmembrane region" description="Helical" evidence="1">
    <location>
        <begin position="530"/>
        <end position="550"/>
    </location>
</feature>
<feature type="topological domain" description="Cytoplasmic" evidence="1">
    <location>
        <begin position="551"/>
        <end position="565"/>
    </location>
</feature>
<feature type="site" description="Cleavage; by host" evidence="1">
    <location>
        <begin position="344"/>
        <end position="345"/>
    </location>
</feature>
<feature type="lipid moiety-binding region" description="S-palmitoyl cysteine; by host" evidence="1">
    <location>
        <position position="554"/>
    </location>
</feature>
<feature type="lipid moiety-binding region" description="S-palmitoyl cysteine; by host" evidence="1">
    <location>
        <position position="561"/>
    </location>
</feature>
<feature type="lipid moiety-binding region" description="S-palmitoyl cysteine; by host" evidence="1">
    <location>
        <position position="564"/>
    </location>
</feature>
<feature type="glycosylation site" description="N-linked (GlcNAc...) asparagine; by host" evidence="1">
    <location>
        <position position="23"/>
    </location>
</feature>
<feature type="glycosylation site" description="N-linked (GlcNAc...) asparagine; by host" evidence="1">
    <location>
        <position position="37"/>
    </location>
</feature>
<feature type="glycosylation site" description="N-linked (GlcNAc...) asparagine; by host" evidence="1">
    <location>
        <position position="53"/>
    </location>
</feature>
<feature type="glycosylation site" description="N-linked (GlcNAc...) asparagine; by host" evidence="1">
    <location>
        <position position="78"/>
    </location>
</feature>
<feature type="glycosylation site" description="N-linked (GlcNAc...) asparagine; by host" evidence="1">
    <location>
        <position position="180"/>
    </location>
</feature>
<feature type="glycosylation site" description="N-linked (GlcNAc...) asparagine; by host" evidence="1">
    <location>
        <position position="300"/>
    </location>
</feature>
<feature type="glycosylation site" description="N-linked (GlcNAc...) asparagine; by host" evidence="1">
    <location>
        <position position="498"/>
    </location>
</feature>
<feature type="disulfide bond" description="Interchain (between HA1 and HA2 chains)" evidence="1">
    <location>
        <begin position="29"/>
        <end position="481"/>
    </location>
</feature>
<feature type="disulfide bond" evidence="1">
    <location>
        <begin position="67"/>
        <end position="292"/>
    </location>
</feature>
<feature type="disulfide bond" evidence="1">
    <location>
        <begin position="112"/>
        <end position="154"/>
    </location>
</feature>
<feature type="disulfide bond" evidence="1">
    <location>
        <begin position="296"/>
        <end position="320"/>
    </location>
</feature>
<feature type="disulfide bond" evidence="1">
    <location>
        <begin position="488"/>
        <end position="492"/>
    </location>
</feature>
<feature type="sequence conflict" description="In Ref. 2; AAA43164." evidence="2" ref="2">
    <original>WVH</original>
    <variation>AAD</variation>
    <location>
        <begin position="13"/>
        <end position="15"/>
    </location>
</feature>
<feature type="sequence conflict" description="In Ref. 2; AAA43164." evidence="2" ref="2">
    <original>RV</original>
    <variation>SG</variation>
    <location>
        <begin position="72"/>
        <end position="73"/>
    </location>
</feature>
<feature type="sequence conflict" description="In Ref. 2; AAA43164." evidence="2" ref="2">
    <original>E</original>
    <variation>G</variation>
    <location>
        <position position="173"/>
    </location>
</feature>
<feature type="sequence conflict" description="In Ref. 2; AAA43164." evidence="2" ref="2">
    <original>V</original>
    <variation>W</variation>
    <location>
        <position position="293"/>
    </location>
</feature>
<feature type="sequence conflict" description="In Ref. 2; AAA43164." evidence="2" ref="2">
    <original>L</original>
    <variation>G</variation>
    <location>
        <position position="377"/>
    </location>
</feature>
<feature type="sequence conflict" description="In Ref. 2; AAA43164." evidence="2" ref="2">
    <original>G</original>
    <variation>A</variation>
    <location>
        <position position="380"/>
    </location>
</feature>
<feature type="sequence conflict" description="In Ref. 2; AAA43164." evidence="2" ref="2">
    <original>I</original>
    <variation>F</variation>
    <location>
        <position position="400"/>
    </location>
</feature>
<feature type="sequence conflict" description="In Ref. 2; AAA43164." evidence="2" ref="2">
    <original>Q</original>
    <variation>E</variation>
    <location>
        <position position="555"/>
    </location>
</feature>
<accession>P15658</accession>
<accession>Q67097</accession>
<accession>Q67098</accession>
<accession>Q83987</accession>
<accession>Q83988</accession>
<gene>
    <name evidence="1" type="primary">HA</name>
</gene>